<dbReference type="EC" id="3.1.2.6" evidence="3"/>
<dbReference type="EMBL" id="Y10292">
    <property type="protein sequence ID" value="CAA71335.1"/>
    <property type="molecule type" value="Genomic_DNA"/>
</dbReference>
<dbReference type="EMBL" id="U51030">
    <property type="protein sequence ID" value="AAB64450.1"/>
    <property type="molecule type" value="Genomic_DNA"/>
</dbReference>
<dbReference type="EMBL" id="AY557739">
    <property type="protein sequence ID" value="AAS56065.1"/>
    <property type="molecule type" value="Genomic_DNA"/>
</dbReference>
<dbReference type="EMBL" id="BK006938">
    <property type="protein sequence ID" value="DAA12114.1"/>
    <property type="molecule type" value="Genomic_DNA"/>
</dbReference>
<dbReference type="PIR" id="S70130">
    <property type="entry name" value="S70130"/>
</dbReference>
<dbReference type="RefSeq" id="NP_010558.3">
    <property type="nucleotide sequence ID" value="NM_001180580.3"/>
</dbReference>
<dbReference type="SMR" id="Q05584"/>
<dbReference type="BioGRID" id="32326">
    <property type="interactions" value="37"/>
</dbReference>
<dbReference type="FunCoup" id="Q05584">
    <property type="interactions" value="409"/>
</dbReference>
<dbReference type="IntAct" id="Q05584">
    <property type="interactions" value="1"/>
</dbReference>
<dbReference type="MINT" id="Q05584"/>
<dbReference type="STRING" id="4932.YDR272W"/>
<dbReference type="iPTMnet" id="Q05584"/>
<dbReference type="PaxDb" id="4932-YDR272W"/>
<dbReference type="PeptideAtlas" id="Q05584"/>
<dbReference type="EnsemblFungi" id="YDR272W_mRNA">
    <property type="protein sequence ID" value="YDR272W"/>
    <property type="gene ID" value="YDR272W"/>
</dbReference>
<dbReference type="GeneID" id="851865"/>
<dbReference type="KEGG" id="sce:YDR272W"/>
<dbReference type="AGR" id="SGD:S000002680"/>
<dbReference type="SGD" id="S000002680">
    <property type="gene designation" value="GLO2"/>
</dbReference>
<dbReference type="VEuPathDB" id="FungiDB:YDR272W"/>
<dbReference type="eggNOG" id="KOG0813">
    <property type="taxonomic scope" value="Eukaryota"/>
</dbReference>
<dbReference type="GeneTree" id="ENSGT00940000171630"/>
<dbReference type="HOGENOM" id="CLU_030571_4_0_1"/>
<dbReference type="InParanoid" id="Q05584"/>
<dbReference type="OMA" id="CKERARF"/>
<dbReference type="OrthoDB" id="515692at2759"/>
<dbReference type="BioCyc" id="MetaCyc:YDR272W-MONOMER"/>
<dbReference type="BioCyc" id="YEAST:YDR272W-MONOMER"/>
<dbReference type="SABIO-RK" id="Q05584"/>
<dbReference type="UniPathway" id="UPA00619">
    <property type="reaction ID" value="UER00676"/>
</dbReference>
<dbReference type="BioGRID-ORCS" id="851865">
    <property type="hits" value="0 hits in 10 CRISPR screens"/>
</dbReference>
<dbReference type="PRO" id="PR:Q05584"/>
<dbReference type="Proteomes" id="UP000002311">
    <property type="component" value="Chromosome IV"/>
</dbReference>
<dbReference type="RNAct" id="Q05584">
    <property type="molecule type" value="protein"/>
</dbReference>
<dbReference type="GO" id="GO:0005737">
    <property type="term" value="C:cytoplasm"/>
    <property type="evidence" value="ECO:0000314"/>
    <property type="project" value="SGD"/>
</dbReference>
<dbReference type="GO" id="GO:0004416">
    <property type="term" value="F:hydroxyacylglutathione hydrolase activity"/>
    <property type="evidence" value="ECO:0000314"/>
    <property type="project" value="SGD"/>
</dbReference>
<dbReference type="GO" id="GO:0046872">
    <property type="term" value="F:metal ion binding"/>
    <property type="evidence" value="ECO:0007669"/>
    <property type="project" value="UniProtKB-KW"/>
</dbReference>
<dbReference type="GO" id="GO:0019243">
    <property type="term" value="P:methylglyoxal catabolic process to D-lactate via S-lactoyl-glutathione"/>
    <property type="evidence" value="ECO:0000314"/>
    <property type="project" value="SGD"/>
</dbReference>
<dbReference type="CDD" id="cd07723">
    <property type="entry name" value="hydroxyacylglutathione_hydrolase_MBL-fold"/>
    <property type="match status" value="1"/>
</dbReference>
<dbReference type="FunFam" id="3.60.15.10:FF:000045">
    <property type="entry name" value="Hydroxyacylglutathione hydrolase"/>
    <property type="match status" value="1"/>
</dbReference>
<dbReference type="Gene3D" id="3.60.15.10">
    <property type="entry name" value="Ribonuclease Z/Hydroxyacylglutathione hydrolase-like"/>
    <property type="match status" value="1"/>
</dbReference>
<dbReference type="InterPro" id="IPR035680">
    <property type="entry name" value="Clx_II_MBL"/>
</dbReference>
<dbReference type="InterPro" id="IPR032282">
    <property type="entry name" value="HAGH_C"/>
</dbReference>
<dbReference type="InterPro" id="IPR001279">
    <property type="entry name" value="Metallo-B-lactamas"/>
</dbReference>
<dbReference type="InterPro" id="IPR036866">
    <property type="entry name" value="RibonucZ/Hydroxyglut_hydro"/>
</dbReference>
<dbReference type="PANTHER" id="PTHR11935">
    <property type="entry name" value="BETA LACTAMASE DOMAIN"/>
    <property type="match status" value="1"/>
</dbReference>
<dbReference type="PANTHER" id="PTHR11935:SF94">
    <property type="entry name" value="TENZING NORGAY, ISOFORM C"/>
    <property type="match status" value="1"/>
</dbReference>
<dbReference type="Pfam" id="PF16123">
    <property type="entry name" value="HAGH_C"/>
    <property type="match status" value="1"/>
</dbReference>
<dbReference type="Pfam" id="PF00753">
    <property type="entry name" value="Lactamase_B"/>
    <property type="match status" value="1"/>
</dbReference>
<dbReference type="SMART" id="SM00849">
    <property type="entry name" value="Lactamase_B"/>
    <property type="match status" value="1"/>
</dbReference>
<dbReference type="SUPFAM" id="SSF56281">
    <property type="entry name" value="Metallo-hydrolase/oxidoreductase"/>
    <property type="match status" value="1"/>
</dbReference>
<name>GLO2_YEAST</name>
<gene>
    <name evidence="8" type="primary">GLO2</name>
    <name type="ordered locus">YDR272W</name>
    <name type="ORF">D9954.5</name>
</gene>
<feature type="chain" id="PRO_0000192346" description="Hydroxyacylglutathione hydrolase, cytoplasmic isozyme">
    <location>
        <begin position="1"/>
        <end position="274"/>
    </location>
</feature>
<feature type="binding site" evidence="2">
    <location>
        <position position="59"/>
    </location>
    <ligand>
        <name>Zn(2+)</name>
        <dbReference type="ChEBI" id="CHEBI:29105"/>
        <label>1</label>
    </ligand>
</feature>
<feature type="binding site" evidence="2">
    <location>
        <position position="61"/>
    </location>
    <ligand>
        <name>Zn(2+)</name>
        <dbReference type="ChEBI" id="CHEBI:29105"/>
        <label>1</label>
    </ligand>
</feature>
<feature type="binding site" evidence="2">
    <location>
        <position position="63"/>
    </location>
    <ligand>
        <name>Zn(2+)</name>
        <dbReference type="ChEBI" id="CHEBI:29105"/>
        <label>2</label>
    </ligand>
</feature>
<feature type="binding site" evidence="2">
    <location>
        <position position="64"/>
    </location>
    <ligand>
        <name>Zn(2+)</name>
        <dbReference type="ChEBI" id="CHEBI:29105"/>
        <label>2</label>
    </ligand>
</feature>
<feature type="binding site" evidence="2">
    <location>
        <position position="121"/>
    </location>
    <ligand>
        <name>Zn(2+)</name>
        <dbReference type="ChEBI" id="CHEBI:29105"/>
        <label>1</label>
    </ligand>
</feature>
<feature type="binding site" evidence="2">
    <location>
        <position position="144"/>
    </location>
    <ligand>
        <name>Zn(2+)</name>
        <dbReference type="ChEBI" id="CHEBI:29105"/>
        <label>1</label>
    </ligand>
</feature>
<feature type="binding site" evidence="2">
    <location>
        <position position="144"/>
    </location>
    <ligand>
        <name>Zn(2+)</name>
        <dbReference type="ChEBI" id="CHEBI:29105"/>
        <label>2</label>
    </ligand>
</feature>
<feature type="binding site" evidence="1">
    <location>
        <position position="153"/>
    </location>
    <ligand>
        <name>substrate</name>
    </ligand>
</feature>
<feature type="binding site" evidence="2">
    <location>
        <begin position="188"/>
        <end position="190"/>
    </location>
    <ligand>
        <name>substrate</name>
    </ligand>
</feature>
<feature type="binding site" evidence="2">
    <location>
        <position position="188"/>
    </location>
    <ligand>
        <name>Zn(2+)</name>
        <dbReference type="ChEBI" id="CHEBI:29105"/>
        <label>2</label>
    </ligand>
</feature>
<feature type="binding site" evidence="2">
    <location>
        <begin position="268"/>
        <end position="271"/>
    </location>
    <ligand>
        <name>substrate</name>
    </ligand>
</feature>
<feature type="modified residue" description="Phosphoserine" evidence="13">
    <location>
        <position position="257"/>
    </location>
</feature>
<feature type="sequence conflict" description="In Ref. 4; AAS56065." evidence="9" ref="4">
    <original>E</original>
    <variation>K</variation>
    <location>
        <position position="222"/>
    </location>
</feature>
<proteinExistence type="evidence at protein level"/>
<protein>
    <recommendedName>
        <fullName evidence="9">Hydroxyacylglutathione hydrolase, cytoplasmic isozyme</fullName>
        <ecNumber evidence="3">3.1.2.6</ecNumber>
    </recommendedName>
    <alternativeName>
        <fullName evidence="8">Glyoxalase II</fullName>
        <shortName>Glx II</shortName>
    </alternativeName>
</protein>
<sequence>MQVKSIKMRWESGGVNYCYLLSDSKNKKSWLIDPAEPPEVLPELTEDEKISVEAIVNTHHHYDHADGNADILKYLKEKNPTSKVEVIGGSKDCPKVTIIPENLKKLHLGDLEITCIRTPCHTRDSICYYVKDPTTDERCIFTGDTLFTAGCGRFFEGTGEEMDIALNNSILETVGRQNWSKTRVYPGHEYTSDNVKFVRKIYPQVGENKALDELEQFCSKHEVTAGRFTLKDEVEFNPFMRLEDPKVQKAAGDTNNSWDRAQIMDKLRAMKNRM</sequence>
<organism>
    <name type="scientific">Saccharomyces cerevisiae (strain ATCC 204508 / S288c)</name>
    <name type="common">Baker's yeast</name>
    <dbReference type="NCBI Taxonomy" id="559292"/>
    <lineage>
        <taxon>Eukaryota</taxon>
        <taxon>Fungi</taxon>
        <taxon>Dikarya</taxon>
        <taxon>Ascomycota</taxon>
        <taxon>Saccharomycotina</taxon>
        <taxon>Saccharomycetes</taxon>
        <taxon>Saccharomycetales</taxon>
        <taxon>Saccharomycetaceae</taxon>
        <taxon>Saccharomyces</taxon>
    </lineage>
</organism>
<reference key="1">
    <citation type="journal article" date="1997" name="J. Biol. Chem.">
        <title>Identification and phenotypic analysis of two glyoxalase II encoding genes from Saccharomyces cerevisiae, GLO2 and GLO4, and intracellular localization of the corresponding proteins.</title>
        <authorList>
            <person name="Bito A."/>
            <person name="Haider M."/>
            <person name="Hadler I."/>
            <person name="Breitenbach M."/>
        </authorList>
    </citation>
    <scope>NUCLEOTIDE SEQUENCE [GENOMIC DNA]</scope>
    <scope>SUBCELLULAR LOCATION</scope>
    <scope>PATHWAY</scope>
    <source>
        <strain>ATCC 200060 / W303</strain>
    </source>
</reference>
<reference key="2">
    <citation type="journal article" date="1997" name="Nature">
        <title>The nucleotide sequence of Saccharomyces cerevisiae chromosome IV.</title>
        <authorList>
            <person name="Jacq C."/>
            <person name="Alt-Moerbe J."/>
            <person name="Andre B."/>
            <person name="Arnold W."/>
            <person name="Bahr A."/>
            <person name="Ballesta J.P.G."/>
            <person name="Bargues M."/>
            <person name="Baron L."/>
            <person name="Becker A."/>
            <person name="Biteau N."/>
            <person name="Bloecker H."/>
            <person name="Blugeon C."/>
            <person name="Boskovic J."/>
            <person name="Brandt P."/>
            <person name="Brueckner M."/>
            <person name="Buitrago M.J."/>
            <person name="Coster F."/>
            <person name="Delaveau T."/>
            <person name="del Rey F."/>
            <person name="Dujon B."/>
            <person name="Eide L.G."/>
            <person name="Garcia-Cantalejo J.M."/>
            <person name="Goffeau A."/>
            <person name="Gomez-Peris A."/>
            <person name="Granotier C."/>
            <person name="Hanemann V."/>
            <person name="Hankeln T."/>
            <person name="Hoheisel J.D."/>
            <person name="Jaeger W."/>
            <person name="Jimenez A."/>
            <person name="Jonniaux J.-L."/>
            <person name="Kraemer C."/>
            <person name="Kuester H."/>
            <person name="Laamanen P."/>
            <person name="Legros Y."/>
            <person name="Louis E.J."/>
            <person name="Moeller-Rieker S."/>
            <person name="Monnet A."/>
            <person name="Moro M."/>
            <person name="Mueller-Auer S."/>
            <person name="Nussbaumer B."/>
            <person name="Paricio N."/>
            <person name="Paulin L."/>
            <person name="Perea J."/>
            <person name="Perez-Alonso M."/>
            <person name="Perez-Ortin J.E."/>
            <person name="Pohl T.M."/>
            <person name="Prydz H."/>
            <person name="Purnelle B."/>
            <person name="Rasmussen S.W."/>
            <person name="Remacha M.A."/>
            <person name="Revuelta J.L."/>
            <person name="Rieger M."/>
            <person name="Salom D."/>
            <person name="Saluz H.P."/>
            <person name="Saiz J.E."/>
            <person name="Saren A.-M."/>
            <person name="Schaefer M."/>
            <person name="Scharfe M."/>
            <person name="Schmidt E.R."/>
            <person name="Schneider C."/>
            <person name="Scholler P."/>
            <person name="Schwarz S."/>
            <person name="Soler-Mira A."/>
            <person name="Urrestarazu L.A."/>
            <person name="Verhasselt P."/>
            <person name="Vissers S."/>
            <person name="Voet M."/>
            <person name="Volckaert G."/>
            <person name="Wagner G."/>
            <person name="Wambutt R."/>
            <person name="Wedler E."/>
            <person name="Wedler H."/>
            <person name="Woelfl S."/>
            <person name="Harris D.E."/>
            <person name="Bowman S."/>
            <person name="Brown D."/>
            <person name="Churcher C.M."/>
            <person name="Connor R."/>
            <person name="Dedman K."/>
            <person name="Gentles S."/>
            <person name="Hamlin N."/>
            <person name="Hunt S."/>
            <person name="Jones L."/>
            <person name="McDonald S."/>
            <person name="Murphy L.D."/>
            <person name="Niblett D."/>
            <person name="Odell C."/>
            <person name="Oliver K."/>
            <person name="Rajandream M.A."/>
            <person name="Richards C."/>
            <person name="Shore L."/>
            <person name="Walsh S.V."/>
            <person name="Barrell B.G."/>
            <person name="Dietrich F.S."/>
            <person name="Mulligan J.T."/>
            <person name="Allen E."/>
            <person name="Araujo R."/>
            <person name="Aviles E."/>
            <person name="Berno A."/>
            <person name="Carpenter J."/>
            <person name="Chen E."/>
            <person name="Cherry J.M."/>
            <person name="Chung E."/>
            <person name="Duncan M."/>
            <person name="Hunicke-Smith S."/>
            <person name="Hyman R.W."/>
            <person name="Komp C."/>
            <person name="Lashkari D."/>
            <person name="Lew H."/>
            <person name="Lin D."/>
            <person name="Mosedale D."/>
            <person name="Nakahara K."/>
            <person name="Namath A."/>
            <person name="Oefner P."/>
            <person name="Oh C."/>
            <person name="Petel F.X."/>
            <person name="Roberts D."/>
            <person name="Schramm S."/>
            <person name="Schroeder M."/>
            <person name="Shogren T."/>
            <person name="Shroff N."/>
            <person name="Winant A."/>
            <person name="Yelton M.A."/>
            <person name="Botstein D."/>
            <person name="Davis R.W."/>
            <person name="Johnston M."/>
            <person name="Andrews S."/>
            <person name="Brinkman R."/>
            <person name="Cooper J."/>
            <person name="Ding H."/>
            <person name="Du Z."/>
            <person name="Favello A."/>
            <person name="Fulton L."/>
            <person name="Gattung S."/>
            <person name="Greco T."/>
            <person name="Hallsworth K."/>
            <person name="Hawkins J."/>
            <person name="Hillier L.W."/>
            <person name="Jier M."/>
            <person name="Johnson D."/>
            <person name="Johnston L."/>
            <person name="Kirsten J."/>
            <person name="Kucaba T."/>
            <person name="Langston Y."/>
            <person name="Latreille P."/>
            <person name="Le T."/>
            <person name="Mardis E."/>
            <person name="Menezes S."/>
            <person name="Miller N."/>
            <person name="Nhan M."/>
            <person name="Pauley A."/>
            <person name="Peluso D."/>
            <person name="Rifkin L."/>
            <person name="Riles L."/>
            <person name="Taich A."/>
            <person name="Trevaskis E."/>
            <person name="Vignati D."/>
            <person name="Wilcox L."/>
            <person name="Wohldman P."/>
            <person name="Vaudin M."/>
            <person name="Wilson R."/>
            <person name="Waterston R."/>
            <person name="Albermann K."/>
            <person name="Hani J."/>
            <person name="Heumann K."/>
            <person name="Kleine K."/>
            <person name="Mewes H.-W."/>
            <person name="Zollner A."/>
            <person name="Zaccaria P."/>
        </authorList>
    </citation>
    <scope>NUCLEOTIDE SEQUENCE [LARGE SCALE GENOMIC DNA]</scope>
    <source>
        <strain>ATCC 204508 / S288c</strain>
    </source>
</reference>
<reference key="3">
    <citation type="journal article" date="2014" name="G3 (Bethesda)">
        <title>The reference genome sequence of Saccharomyces cerevisiae: Then and now.</title>
        <authorList>
            <person name="Engel S.R."/>
            <person name="Dietrich F.S."/>
            <person name="Fisk D.G."/>
            <person name="Binkley G."/>
            <person name="Balakrishnan R."/>
            <person name="Costanzo M.C."/>
            <person name="Dwight S.S."/>
            <person name="Hitz B.C."/>
            <person name="Karra K."/>
            <person name="Nash R.S."/>
            <person name="Weng S."/>
            <person name="Wong E.D."/>
            <person name="Lloyd P."/>
            <person name="Skrzypek M.S."/>
            <person name="Miyasato S.R."/>
            <person name="Simison M."/>
            <person name="Cherry J.M."/>
        </authorList>
    </citation>
    <scope>GENOME REANNOTATION</scope>
    <source>
        <strain>ATCC 204508 / S288c</strain>
    </source>
</reference>
<reference key="4">
    <citation type="journal article" date="2007" name="Genome Res.">
        <title>Approaching a complete repository of sequence-verified protein-encoding clones for Saccharomyces cerevisiae.</title>
        <authorList>
            <person name="Hu Y."/>
            <person name="Rolfs A."/>
            <person name="Bhullar B."/>
            <person name="Murthy T.V.S."/>
            <person name="Zhu C."/>
            <person name="Berger M.F."/>
            <person name="Camargo A.A."/>
            <person name="Kelley F."/>
            <person name="McCarron S."/>
            <person name="Jepson D."/>
            <person name="Richardson A."/>
            <person name="Raphael J."/>
            <person name="Moreira D."/>
            <person name="Taycher E."/>
            <person name="Zuo D."/>
            <person name="Mohr S."/>
            <person name="Kane M.F."/>
            <person name="Williamson J."/>
            <person name="Simpson A.J.G."/>
            <person name="Bulyk M.L."/>
            <person name="Harlow E."/>
            <person name="Marsischky G."/>
            <person name="Kolodner R.D."/>
            <person name="LaBaer J."/>
        </authorList>
    </citation>
    <scope>NUCLEOTIDE SEQUENCE [GENOMIC DNA]</scope>
    <source>
        <strain>ATCC 204508 / S288c</strain>
    </source>
</reference>
<reference key="5">
    <citation type="journal article" date="1986" name="Agric. Biol. Chem.">
        <title>Metabolism of alpha-ketoaldehydes in yeasts: purification and characterization of glyoxalase II from Saccharomyces cerevisiae.</title>
        <authorList>
            <person name="Murata K."/>
            <person name="Inoue Y."/>
            <person name="Watanabe K."/>
            <person name="Fukuda Y."/>
            <person name="Saikusa T."/>
            <person name="Shimosaka M."/>
            <person name="Kimura A."/>
        </authorList>
    </citation>
    <scope>FUNCTION</scope>
    <scope>ACTIVITY REGULATION</scope>
</reference>
<reference key="6">
    <citation type="journal article" date="1987" name="Agric. Biol. Chem.">
        <title>Purification and characterization of glutathione thiol esterase from Saccharomyces cerevisiae.</title>
        <authorList>
            <person name="Murata K."/>
            <person name="Sato N."/>
            <person name="Rhee H.-I."/>
            <person name="Watanabe K."/>
            <person name="Kimura A."/>
        </authorList>
    </citation>
    <scope>FUNCTION</scope>
</reference>
<reference key="7">
    <citation type="journal article" date="1999" name="Protein Expr. Purif.">
        <title>Heterologous expression, purification, and kinetic comparison of the cytoplasmic and mitochondrial glyoxalase II enzymes, Glo2p and Glo4p, from Saccharomyces cerevisiae.</title>
        <authorList>
            <person name="Bito A."/>
            <person name="Haider M."/>
            <person name="Briza P."/>
            <person name="Strasser P."/>
            <person name="Breitenbach M."/>
        </authorList>
    </citation>
    <scope>FUNCTION</scope>
    <scope>CATALYTIC ACTIVITY</scope>
    <scope>BIOPHYSICOCHEMICAL PROPERTIES</scope>
    <scope>MASS SPECTROMETRY</scope>
</reference>
<reference key="8">
    <citation type="journal article" date="2003" name="Nature">
        <title>Global analysis of protein expression in yeast.</title>
        <authorList>
            <person name="Ghaemmaghami S."/>
            <person name="Huh W.-K."/>
            <person name="Bower K."/>
            <person name="Howson R.W."/>
            <person name="Belle A."/>
            <person name="Dephoure N."/>
            <person name="O'Shea E.K."/>
            <person name="Weissman J.S."/>
        </authorList>
    </citation>
    <scope>LEVEL OF PROTEIN EXPRESSION [LARGE SCALE ANALYSIS]</scope>
</reference>
<reference key="9">
    <citation type="journal article" date="2008" name="Mol. Cell. Proteomics">
        <title>A multidimensional chromatography technology for in-depth phosphoproteome analysis.</title>
        <authorList>
            <person name="Albuquerque C.P."/>
            <person name="Smolka M.B."/>
            <person name="Payne S.H."/>
            <person name="Bafna V."/>
            <person name="Eng J."/>
            <person name="Zhou H."/>
        </authorList>
    </citation>
    <scope>PHOSPHORYLATION [LARGE SCALE ANALYSIS] AT SER-257</scope>
    <scope>IDENTIFICATION BY MASS SPECTROMETRY [LARGE SCALE ANALYSIS]</scope>
</reference>
<reference key="10">
    <citation type="journal article" date="2012" name="Proc. Natl. Acad. Sci. U.S.A.">
        <title>N-terminal acetylome analyses and functional insights of the N-terminal acetyltransferase NatB.</title>
        <authorList>
            <person name="Van Damme P."/>
            <person name="Lasa M."/>
            <person name="Polevoda B."/>
            <person name="Gazquez C."/>
            <person name="Elosegui-Artola A."/>
            <person name="Kim D.S."/>
            <person name="De Juan-Pardo E."/>
            <person name="Demeyer K."/>
            <person name="Hole K."/>
            <person name="Larrea E."/>
            <person name="Timmerman E."/>
            <person name="Prieto J."/>
            <person name="Arnesen T."/>
            <person name="Sherman F."/>
            <person name="Gevaert K."/>
            <person name="Aldabe R."/>
        </authorList>
    </citation>
    <scope>IDENTIFICATION BY MASS SPECTROMETRY [LARGE SCALE ANALYSIS]</scope>
</reference>
<accession>Q05584</accession>
<accession>D6VSQ4</accession>
<accession>E9P8T0</accession>
<keyword id="KW-0963">Cytoplasm</keyword>
<keyword id="KW-0378">Hydrolase</keyword>
<keyword id="KW-0479">Metal-binding</keyword>
<keyword id="KW-0597">Phosphoprotein</keyword>
<keyword id="KW-1185">Reference proteome</keyword>
<keyword id="KW-0862">Zinc</keyword>
<evidence type="ECO:0000250" key="1"/>
<evidence type="ECO:0000250" key="2">
    <source>
        <dbReference type="UniProtKB" id="Q16775"/>
    </source>
</evidence>
<evidence type="ECO:0000269" key="3">
    <source>
    </source>
</evidence>
<evidence type="ECO:0000269" key="4">
    <source>
    </source>
</evidence>
<evidence type="ECO:0000269" key="5">
    <source>
    </source>
</evidence>
<evidence type="ECO:0000269" key="6">
    <source ref="5"/>
</evidence>
<evidence type="ECO:0000269" key="7">
    <source ref="6"/>
</evidence>
<evidence type="ECO:0000303" key="8">
    <source>
    </source>
</evidence>
<evidence type="ECO:0000305" key="9"/>
<evidence type="ECO:0000305" key="10">
    <source>
    </source>
</evidence>
<evidence type="ECO:0000305" key="11">
    <source ref="5"/>
</evidence>
<evidence type="ECO:0000305" key="12">
    <source ref="6"/>
</evidence>
<evidence type="ECO:0007744" key="13">
    <source>
    </source>
</evidence>
<comment type="function">
    <text evidence="3 6 7">Thiolesterase that catalyzes the hydrolysis of S-D-lactoylglutathione to form glutathione and D-lactic acid. Involved in the metabolism of methylglyoxal, a toxic compound for yeast proliferation, by converting methylglyoxal to lactate via S-D-lactoylglutathione by sequential enzyme reactions catalyzed by glyoxalase I and glyoxalase II.</text>
</comment>
<comment type="catalytic activity">
    <reaction evidence="3">
        <text>an S-(2-hydroxyacyl)glutathione + H2O = a 2-hydroxy carboxylate + glutathione + H(+)</text>
        <dbReference type="Rhea" id="RHEA:21864"/>
        <dbReference type="ChEBI" id="CHEBI:15377"/>
        <dbReference type="ChEBI" id="CHEBI:15378"/>
        <dbReference type="ChEBI" id="CHEBI:57925"/>
        <dbReference type="ChEBI" id="CHEBI:58896"/>
        <dbReference type="ChEBI" id="CHEBI:71261"/>
        <dbReference type="EC" id="3.1.2.6"/>
    </reaction>
</comment>
<comment type="catalytic activity">
    <reaction evidence="3">
        <text>(R)-S-lactoylglutathione + H2O = (R)-lactate + glutathione + H(+)</text>
        <dbReference type="Rhea" id="RHEA:25245"/>
        <dbReference type="ChEBI" id="CHEBI:15377"/>
        <dbReference type="ChEBI" id="CHEBI:15378"/>
        <dbReference type="ChEBI" id="CHEBI:16004"/>
        <dbReference type="ChEBI" id="CHEBI:57474"/>
        <dbReference type="ChEBI" id="CHEBI:57925"/>
        <dbReference type="EC" id="3.1.2.6"/>
    </reaction>
</comment>
<comment type="cofactor">
    <cofactor evidence="2">
        <name>Zn(2+)</name>
        <dbReference type="ChEBI" id="CHEBI:29105"/>
    </cofactor>
    <text evidence="2">Binds 2 Zn(2+) ions per subunit.</text>
</comment>
<comment type="activity regulation">
    <text evidence="6">Inhibited by various thiol compounds such as glutathione and coenzyme A.</text>
</comment>
<comment type="biophysicochemical properties">
    <kinetics>
        <KM evidence="3">94 uM for (R)-S-lactoylglutathione</KM>
        <KM evidence="3">22.5 uM for (R)-S-mandeloylglutathione</KM>
        <text evidence="3">kcat is 979 sec(-1) with (R)-S-lactoylglutathione as substrate and 35.1 sec(-1) with (R)-S-mandeloylglutathione as substrate.</text>
    </kinetics>
    <phDependence>
        <text evidence="3">Optimum pH is 7-8.</text>
    </phDependence>
</comment>
<comment type="pathway">
    <text evidence="10">Secondary metabolite metabolism; methylglyoxal degradation; (R)-lactate from methylglyoxal: step 2/2.</text>
</comment>
<comment type="subcellular location">
    <subcellularLocation>
        <location evidence="5">Cytoplasm</location>
    </subcellularLocation>
</comment>
<comment type="mass spectrometry"/>
<comment type="miscellaneous">
    <text evidence="4">Present with 13700 molecules/cell in log phase SD medium.</text>
</comment>
<comment type="similarity">
    <text evidence="9">Belongs to the metallo-beta-lactamase superfamily. Glyoxalase II family.</text>
</comment>
<comment type="caution">
    <text evidence="5 11 12">The enzyme reported here differs from 2 previously reported yeast proteins with glyoxalase II activity both in molecular weight and in the kinetic parameters determined (Ref.5, Ref.6). The lower molecular masses and the much lower specific activities could indicate that these proteins were degradation products of either GLO2 or GLO4. In extracts of a yeast strain lacking both glyoxalase II genes no residual glyoxalase II activity was detected, indicating that there is no further protein with glyoxalase II activity present in yeast cells (PubMed:9261170).</text>
</comment>